<comment type="function">
    <text evidence="1">Involved in ubiquitin-mediated protein degradation. Regulatory factor in the ubiquitin/proteasome pathway that controls the turnover of proteasome substrates. Targets proteasomes to the nucleus and facilitates the degradation of nuclear proteins (By similarity).</text>
</comment>
<comment type="subunit">
    <text evidence="1">Binds the proteasome. Interacts with karyopherin SRP1 and Proteasome subunit RPN11.</text>
</comment>
<comment type="subcellular location">
    <subcellularLocation>
        <location evidence="1">Cytoplasm</location>
    </subcellularLocation>
    <subcellularLocation>
        <location evidence="1">Nucleus</location>
    </subcellularLocation>
</comment>
<comment type="similarity">
    <text evidence="3">Belongs to the cut8/STS1 family.</text>
</comment>
<dbReference type="EMBL" id="AAFW02000124">
    <property type="protein sequence ID" value="EDN61505.1"/>
    <property type="molecule type" value="Genomic_DNA"/>
</dbReference>
<dbReference type="SMR" id="A6ZVT0"/>
<dbReference type="HOGENOM" id="CLU_054606_1_0_1"/>
<dbReference type="OrthoDB" id="28232at4893"/>
<dbReference type="Proteomes" id="UP000007060">
    <property type="component" value="Unassembled WGS sequence"/>
</dbReference>
<dbReference type="GO" id="GO:0005737">
    <property type="term" value="C:cytoplasm"/>
    <property type="evidence" value="ECO:0007669"/>
    <property type="project" value="UniProtKB-SubCell"/>
</dbReference>
<dbReference type="GO" id="GO:0031965">
    <property type="term" value="C:nuclear membrane"/>
    <property type="evidence" value="ECO:0007669"/>
    <property type="project" value="TreeGrafter"/>
</dbReference>
<dbReference type="GO" id="GO:0070628">
    <property type="term" value="F:proteasome binding"/>
    <property type="evidence" value="ECO:0007669"/>
    <property type="project" value="TreeGrafter"/>
</dbReference>
<dbReference type="GO" id="GO:0071630">
    <property type="term" value="P:nuclear protein quality control by the ubiquitin-proteasome system"/>
    <property type="evidence" value="ECO:0007669"/>
    <property type="project" value="InterPro"/>
</dbReference>
<dbReference type="GO" id="GO:0031144">
    <property type="term" value="P:proteasome localization"/>
    <property type="evidence" value="ECO:0007669"/>
    <property type="project" value="InterPro"/>
</dbReference>
<dbReference type="GO" id="GO:0015031">
    <property type="term" value="P:protein transport"/>
    <property type="evidence" value="ECO:0007669"/>
    <property type="project" value="UniProtKB-KW"/>
</dbReference>
<dbReference type="FunFam" id="1.20.58.1590:FF:000003">
    <property type="entry name" value="Tethering factor for nuclear proteasome STS1"/>
    <property type="match status" value="1"/>
</dbReference>
<dbReference type="Gene3D" id="1.20.58.1590">
    <property type="entry name" value="Tethering factor for nuclear proteasome Cut8/Sts1"/>
    <property type="match status" value="1"/>
</dbReference>
<dbReference type="InterPro" id="IPR013868">
    <property type="entry name" value="Cut8/Sts1_fam"/>
</dbReference>
<dbReference type="InterPro" id="IPR038422">
    <property type="entry name" value="Cut8/Sts1_sf"/>
</dbReference>
<dbReference type="PANTHER" id="PTHR28032">
    <property type="entry name" value="FI02826P"/>
    <property type="match status" value="1"/>
</dbReference>
<dbReference type="PANTHER" id="PTHR28032:SF1">
    <property type="entry name" value="FI02826P"/>
    <property type="match status" value="1"/>
</dbReference>
<dbReference type="Pfam" id="PF08559">
    <property type="entry name" value="Cut8"/>
    <property type="match status" value="1"/>
</dbReference>
<organism>
    <name type="scientific">Saccharomyces cerevisiae (strain YJM789)</name>
    <name type="common">Baker's yeast</name>
    <dbReference type="NCBI Taxonomy" id="307796"/>
    <lineage>
        <taxon>Eukaryota</taxon>
        <taxon>Fungi</taxon>
        <taxon>Dikarya</taxon>
        <taxon>Ascomycota</taxon>
        <taxon>Saccharomycotina</taxon>
        <taxon>Saccharomycetes</taxon>
        <taxon>Saccharomycetales</taxon>
        <taxon>Saccharomycetaceae</taxon>
        <taxon>Saccharomyces</taxon>
    </lineage>
</organism>
<gene>
    <name type="primary">STS1</name>
    <name type="synonym">DBF8</name>
    <name type="synonym">SSM5</name>
    <name type="ORF">SCY_2796</name>
</gene>
<keyword id="KW-0963">Cytoplasm</keyword>
<keyword id="KW-0539">Nucleus</keyword>
<keyword id="KW-0653">Protein transport</keyword>
<keyword id="KW-0813">Transport</keyword>
<evidence type="ECO:0000250" key="1"/>
<evidence type="ECO:0000256" key="2">
    <source>
        <dbReference type="SAM" id="MobiDB-lite"/>
    </source>
</evidence>
<evidence type="ECO:0000305" key="3"/>
<reference key="1">
    <citation type="journal article" date="2007" name="Proc. Natl. Acad. Sci. U.S.A.">
        <title>Genome sequencing and comparative analysis of Saccharomyces cerevisiae strain YJM789.</title>
        <authorList>
            <person name="Wei W."/>
            <person name="McCusker J.H."/>
            <person name="Hyman R.W."/>
            <person name="Jones T."/>
            <person name="Ning Y."/>
            <person name="Cao Z."/>
            <person name="Gu Z."/>
            <person name="Bruno D."/>
            <person name="Miranda M."/>
            <person name="Nguyen M."/>
            <person name="Wilhelmy J."/>
            <person name="Komp C."/>
            <person name="Tamse R."/>
            <person name="Wang X."/>
            <person name="Jia P."/>
            <person name="Luedi P."/>
            <person name="Oefner P.J."/>
            <person name="David L."/>
            <person name="Dietrich F.S."/>
            <person name="Li Y."/>
            <person name="Davis R.W."/>
            <person name="Steinmetz L.M."/>
        </authorList>
    </citation>
    <scope>NUCLEOTIDE SEQUENCE [LARGE SCALE GENOMIC DNA]</scope>
    <source>
        <strain>YJM789</strain>
    </source>
</reference>
<protein>
    <recommendedName>
        <fullName>Tethering factor for nuclear proteasome STS1</fullName>
    </recommendedName>
    <alternativeName>
        <fullName>Dumbbell former protein 8</fullName>
    </alternativeName>
    <alternativeName>
        <fullName>SEC23 suppressor 1</fullName>
    </alternativeName>
</protein>
<sequence>MMGFEWGFKPSSKITQSTVSSQGTGNVMIPTAGVKQKRRYANEEQEEEELPRNKNVMKYGGVSKRRPQPGSLIRGQPLPLLRGMELMNKNQYRQLLVDLMTKHPEIQQSVHTRVIGLDFSIQKCLDMLKQKSEAVYQSIPYNRSYESNKLDDYAFVRMKPQILEFLNCLVDFILDNIPPRLENLHASLKFLDICTELVIKLPRFELASNNYYYDKCIEQLSHVWCTLIEHVARDRIILLADNSSVWKSHMTRLQVYNEHSNGLLERPLQLFKSLDMGSPSAASSSTLSLQESIIYHHDTMTANENNNNSGSAATDSPFN</sequence>
<accession>A6ZVT0</accession>
<name>STS1_YEAS7</name>
<proteinExistence type="inferred from homology"/>
<feature type="chain" id="PRO_0000409438" description="Tethering factor for nuclear proteasome STS1">
    <location>
        <begin position="1"/>
        <end position="319"/>
    </location>
</feature>
<feature type="region of interest" description="Disordered" evidence="2">
    <location>
        <begin position="34"/>
        <end position="74"/>
    </location>
</feature>